<name>ARGC_DESAP</name>
<keyword id="KW-0028">Amino-acid biosynthesis</keyword>
<keyword id="KW-0055">Arginine biosynthesis</keyword>
<keyword id="KW-0963">Cytoplasm</keyword>
<keyword id="KW-0521">NADP</keyword>
<keyword id="KW-0560">Oxidoreductase</keyword>
<keyword id="KW-1185">Reference proteome</keyword>
<comment type="function">
    <text evidence="1">Catalyzes the NADPH-dependent reduction of N-acetyl-5-glutamyl phosphate to yield N-acetyl-L-glutamate 5-semialdehyde.</text>
</comment>
<comment type="catalytic activity">
    <reaction evidence="1">
        <text>N-acetyl-L-glutamate 5-semialdehyde + phosphate + NADP(+) = N-acetyl-L-glutamyl 5-phosphate + NADPH + H(+)</text>
        <dbReference type="Rhea" id="RHEA:21588"/>
        <dbReference type="ChEBI" id="CHEBI:15378"/>
        <dbReference type="ChEBI" id="CHEBI:29123"/>
        <dbReference type="ChEBI" id="CHEBI:43474"/>
        <dbReference type="ChEBI" id="CHEBI:57783"/>
        <dbReference type="ChEBI" id="CHEBI:57936"/>
        <dbReference type="ChEBI" id="CHEBI:58349"/>
        <dbReference type="EC" id="1.2.1.38"/>
    </reaction>
</comment>
<comment type="pathway">
    <text evidence="1">Amino-acid biosynthesis; L-arginine biosynthesis; N(2)-acetyl-L-ornithine from L-glutamate: step 3/4.</text>
</comment>
<comment type="subcellular location">
    <subcellularLocation>
        <location evidence="1">Cytoplasm</location>
    </subcellularLocation>
</comment>
<comment type="similarity">
    <text evidence="1">Belongs to the NAGSA dehydrogenase family. Type 1 subfamily.</text>
</comment>
<proteinExistence type="inferred from homology"/>
<protein>
    <recommendedName>
        <fullName evidence="1">N-acetyl-gamma-glutamyl-phosphate reductase</fullName>
        <shortName evidence="1">AGPR</shortName>
        <ecNumber evidence="1">1.2.1.38</ecNumber>
    </recommendedName>
    <alternativeName>
        <fullName evidence="1">N-acetyl-glutamate semialdehyde dehydrogenase</fullName>
        <shortName evidence="1">NAGSA dehydrogenase</shortName>
    </alternativeName>
</protein>
<gene>
    <name evidence="1" type="primary">argC</name>
    <name type="ordered locus">Daud_0339</name>
</gene>
<reference key="1">
    <citation type="submission" date="2007-10" db="EMBL/GenBank/DDBJ databases">
        <title>Complete sequence of chromosome of Desulforudis audaxviator MP104C.</title>
        <authorList>
            <person name="Copeland A."/>
            <person name="Lucas S."/>
            <person name="Lapidus A."/>
            <person name="Barry K."/>
            <person name="Glavina del Rio T."/>
            <person name="Dalin E."/>
            <person name="Tice H."/>
            <person name="Bruce D."/>
            <person name="Pitluck S."/>
            <person name="Lowry S.R."/>
            <person name="Larimer F."/>
            <person name="Land M.L."/>
            <person name="Hauser L."/>
            <person name="Kyrpides N."/>
            <person name="Ivanova N.N."/>
            <person name="Richardson P."/>
        </authorList>
    </citation>
    <scope>NUCLEOTIDE SEQUENCE [LARGE SCALE GENOMIC DNA]</scope>
    <source>
        <strain>MP104C</strain>
    </source>
</reference>
<sequence length="346" mass="38099">MIKVGIVGSTGYTGAELVRLLTRHPHVELVGLTSRSYVGEHYWRVYPHLKNYTDLQCEELDLPRLVDRADVLFTALPHGHSMDVAREVLSRGKKLVDLGADFRFRDQAVYESWYRVPHTAAELLPRAVYGLPEINREALRGADLVANPGCYPTASILGLAPLLAKGLIDPGEIVIDAKSGVSGAGRGFSLKTHFAETNENFQAYNVGVHRHTPEIEEQLGRLAGRDLTVAFTPHLVPMVRGILATIYTRPAVLPDRDELYELYADYYREEPFVRVLPPGMLPQTKAVAGTNHCDLAVVPDPRTGRVIVLSAIDNLMKGASGQAVQNLNLIFGLDETTGLVFPGLYP</sequence>
<organism>
    <name type="scientific">Desulforudis audaxviator (strain MP104C)</name>
    <dbReference type="NCBI Taxonomy" id="477974"/>
    <lineage>
        <taxon>Bacteria</taxon>
        <taxon>Bacillati</taxon>
        <taxon>Bacillota</taxon>
        <taxon>Clostridia</taxon>
        <taxon>Thermoanaerobacterales</taxon>
        <taxon>Candidatus Desulforudaceae</taxon>
        <taxon>Candidatus Desulforudis</taxon>
    </lineage>
</organism>
<dbReference type="EC" id="1.2.1.38" evidence="1"/>
<dbReference type="EMBL" id="CP000860">
    <property type="protein sequence ID" value="ACA58897.1"/>
    <property type="molecule type" value="Genomic_DNA"/>
</dbReference>
<dbReference type="RefSeq" id="WP_012301489.1">
    <property type="nucleotide sequence ID" value="NC_010424.1"/>
</dbReference>
<dbReference type="SMR" id="B1I1C5"/>
<dbReference type="STRING" id="477974.Daud_0339"/>
<dbReference type="KEGG" id="dau:Daud_0339"/>
<dbReference type="eggNOG" id="COG0002">
    <property type="taxonomic scope" value="Bacteria"/>
</dbReference>
<dbReference type="HOGENOM" id="CLU_006384_0_1_9"/>
<dbReference type="OrthoDB" id="9801289at2"/>
<dbReference type="UniPathway" id="UPA00068">
    <property type="reaction ID" value="UER00108"/>
</dbReference>
<dbReference type="Proteomes" id="UP000008544">
    <property type="component" value="Chromosome"/>
</dbReference>
<dbReference type="GO" id="GO:0005737">
    <property type="term" value="C:cytoplasm"/>
    <property type="evidence" value="ECO:0007669"/>
    <property type="project" value="UniProtKB-SubCell"/>
</dbReference>
<dbReference type="GO" id="GO:0003942">
    <property type="term" value="F:N-acetyl-gamma-glutamyl-phosphate reductase activity"/>
    <property type="evidence" value="ECO:0007669"/>
    <property type="project" value="UniProtKB-UniRule"/>
</dbReference>
<dbReference type="GO" id="GO:0051287">
    <property type="term" value="F:NAD binding"/>
    <property type="evidence" value="ECO:0007669"/>
    <property type="project" value="InterPro"/>
</dbReference>
<dbReference type="GO" id="GO:0070401">
    <property type="term" value="F:NADP+ binding"/>
    <property type="evidence" value="ECO:0007669"/>
    <property type="project" value="InterPro"/>
</dbReference>
<dbReference type="GO" id="GO:0006526">
    <property type="term" value="P:L-arginine biosynthetic process"/>
    <property type="evidence" value="ECO:0007669"/>
    <property type="project" value="UniProtKB-UniRule"/>
</dbReference>
<dbReference type="CDD" id="cd23934">
    <property type="entry name" value="AGPR_1_C"/>
    <property type="match status" value="1"/>
</dbReference>
<dbReference type="CDD" id="cd17895">
    <property type="entry name" value="AGPR_1_N"/>
    <property type="match status" value="1"/>
</dbReference>
<dbReference type="FunFam" id="3.30.360.10:FF:000014">
    <property type="entry name" value="N-acetyl-gamma-glutamyl-phosphate reductase"/>
    <property type="match status" value="1"/>
</dbReference>
<dbReference type="Gene3D" id="3.30.360.10">
    <property type="entry name" value="Dihydrodipicolinate Reductase, domain 2"/>
    <property type="match status" value="1"/>
</dbReference>
<dbReference type="Gene3D" id="3.40.50.720">
    <property type="entry name" value="NAD(P)-binding Rossmann-like Domain"/>
    <property type="match status" value="1"/>
</dbReference>
<dbReference type="HAMAP" id="MF_00150">
    <property type="entry name" value="ArgC_type1"/>
    <property type="match status" value="1"/>
</dbReference>
<dbReference type="InterPro" id="IPR023013">
    <property type="entry name" value="AGPR_AS"/>
</dbReference>
<dbReference type="InterPro" id="IPR000706">
    <property type="entry name" value="AGPR_type-1"/>
</dbReference>
<dbReference type="InterPro" id="IPR036291">
    <property type="entry name" value="NAD(P)-bd_dom_sf"/>
</dbReference>
<dbReference type="InterPro" id="IPR050085">
    <property type="entry name" value="NAGSA_dehydrogenase"/>
</dbReference>
<dbReference type="InterPro" id="IPR000534">
    <property type="entry name" value="Semialdehyde_DH_NAD-bd"/>
</dbReference>
<dbReference type="NCBIfam" id="TIGR01850">
    <property type="entry name" value="argC"/>
    <property type="match status" value="1"/>
</dbReference>
<dbReference type="PANTHER" id="PTHR32338:SF10">
    <property type="entry name" value="N-ACETYL-GAMMA-GLUTAMYL-PHOSPHATE REDUCTASE, CHLOROPLASTIC-RELATED"/>
    <property type="match status" value="1"/>
</dbReference>
<dbReference type="PANTHER" id="PTHR32338">
    <property type="entry name" value="N-ACETYL-GAMMA-GLUTAMYL-PHOSPHATE REDUCTASE, CHLOROPLASTIC-RELATED-RELATED"/>
    <property type="match status" value="1"/>
</dbReference>
<dbReference type="Pfam" id="PF01118">
    <property type="entry name" value="Semialdhyde_dh"/>
    <property type="match status" value="1"/>
</dbReference>
<dbReference type="Pfam" id="PF22698">
    <property type="entry name" value="Semialdhyde_dhC_1"/>
    <property type="match status" value="1"/>
</dbReference>
<dbReference type="SMART" id="SM00859">
    <property type="entry name" value="Semialdhyde_dh"/>
    <property type="match status" value="1"/>
</dbReference>
<dbReference type="SUPFAM" id="SSF55347">
    <property type="entry name" value="Glyceraldehyde-3-phosphate dehydrogenase-like, C-terminal domain"/>
    <property type="match status" value="1"/>
</dbReference>
<dbReference type="SUPFAM" id="SSF51735">
    <property type="entry name" value="NAD(P)-binding Rossmann-fold domains"/>
    <property type="match status" value="1"/>
</dbReference>
<dbReference type="PROSITE" id="PS01224">
    <property type="entry name" value="ARGC"/>
    <property type="match status" value="1"/>
</dbReference>
<feature type="chain" id="PRO_1000096722" description="N-acetyl-gamma-glutamyl-phosphate reductase">
    <location>
        <begin position="1"/>
        <end position="346"/>
    </location>
</feature>
<feature type="active site" evidence="1">
    <location>
        <position position="150"/>
    </location>
</feature>
<accession>B1I1C5</accession>
<evidence type="ECO:0000255" key="1">
    <source>
        <dbReference type="HAMAP-Rule" id="MF_00150"/>
    </source>
</evidence>